<feature type="chain" id="PRO_1000196314" description="Small ribosomal subunit protein bS16">
    <location>
        <begin position="1"/>
        <end position="82"/>
    </location>
</feature>
<sequence length="82" mass="9056">MVTIRLTRGGAKKRPFYQIVVADSRSPRDGRFIERIGFFNPLAAGQAERLRLDVAKVDAWVAKGADLSDRVASLVKEARKAA</sequence>
<gene>
    <name evidence="1" type="primary">rpsP</name>
    <name type="ordered locus">APJL_1822</name>
</gene>
<protein>
    <recommendedName>
        <fullName evidence="1">Small ribosomal subunit protein bS16</fullName>
    </recommendedName>
    <alternativeName>
        <fullName evidence="2">30S ribosomal protein S16</fullName>
    </alternativeName>
</protein>
<comment type="similarity">
    <text evidence="1">Belongs to the bacterial ribosomal protein bS16 family.</text>
</comment>
<organism>
    <name type="scientific">Actinobacillus pleuropneumoniae serotype 3 (strain JL03)</name>
    <dbReference type="NCBI Taxonomy" id="434271"/>
    <lineage>
        <taxon>Bacteria</taxon>
        <taxon>Pseudomonadati</taxon>
        <taxon>Pseudomonadota</taxon>
        <taxon>Gammaproteobacteria</taxon>
        <taxon>Pasteurellales</taxon>
        <taxon>Pasteurellaceae</taxon>
        <taxon>Actinobacillus</taxon>
    </lineage>
</organism>
<dbReference type="EMBL" id="CP000687">
    <property type="protein sequence ID" value="ABY70372.1"/>
    <property type="molecule type" value="Genomic_DNA"/>
</dbReference>
<dbReference type="RefSeq" id="WP_005599334.1">
    <property type="nucleotide sequence ID" value="NC_010278.1"/>
</dbReference>
<dbReference type="SMR" id="B0BSV8"/>
<dbReference type="GeneID" id="48600079"/>
<dbReference type="KEGG" id="apj:APJL_1822"/>
<dbReference type="HOGENOM" id="CLU_100590_5_1_6"/>
<dbReference type="Proteomes" id="UP000008547">
    <property type="component" value="Chromosome"/>
</dbReference>
<dbReference type="GO" id="GO:0005737">
    <property type="term" value="C:cytoplasm"/>
    <property type="evidence" value="ECO:0007669"/>
    <property type="project" value="UniProtKB-ARBA"/>
</dbReference>
<dbReference type="GO" id="GO:0015935">
    <property type="term" value="C:small ribosomal subunit"/>
    <property type="evidence" value="ECO:0007669"/>
    <property type="project" value="TreeGrafter"/>
</dbReference>
<dbReference type="GO" id="GO:0003735">
    <property type="term" value="F:structural constituent of ribosome"/>
    <property type="evidence" value="ECO:0007669"/>
    <property type="project" value="InterPro"/>
</dbReference>
<dbReference type="GO" id="GO:0006412">
    <property type="term" value="P:translation"/>
    <property type="evidence" value="ECO:0007669"/>
    <property type="project" value="UniProtKB-UniRule"/>
</dbReference>
<dbReference type="FunFam" id="3.30.1320.10:FF:000001">
    <property type="entry name" value="30S ribosomal protein S16"/>
    <property type="match status" value="1"/>
</dbReference>
<dbReference type="Gene3D" id="3.30.1320.10">
    <property type="match status" value="1"/>
</dbReference>
<dbReference type="HAMAP" id="MF_00385">
    <property type="entry name" value="Ribosomal_bS16"/>
    <property type="match status" value="1"/>
</dbReference>
<dbReference type="InterPro" id="IPR000307">
    <property type="entry name" value="Ribosomal_bS16"/>
</dbReference>
<dbReference type="InterPro" id="IPR020592">
    <property type="entry name" value="Ribosomal_bS16_CS"/>
</dbReference>
<dbReference type="InterPro" id="IPR023803">
    <property type="entry name" value="Ribosomal_bS16_dom_sf"/>
</dbReference>
<dbReference type="NCBIfam" id="TIGR00002">
    <property type="entry name" value="S16"/>
    <property type="match status" value="1"/>
</dbReference>
<dbReference type="PANTHER" id="PTHR12919">
    <property type="entry name" value="30S RIBOSOMAL PROTEIN S16"/>
    <property type="match status" value="1"/>
</dbReference>
<dbReference type="PANTHER" id="PTHR12919:SF20">
    <property type="entry name" value="SMALL RIBOSOMAL SUBUNIT PROTEIN BS16M"/>
    <property type="match status" value="1"/>
</dbReference>
<dbReference type="Pfam" id="PF00886">
    <property type="entry name" value="Ribosomal_S16"/>
    <property type="match status" value="1"/>
</dbReference>
<dbReference type="SUPFAM" id="SSF54565">
    <property type="entry name" value="Ribosomal protein S16"/>
    <property type="match status" value="1"/>
</dbReference>
<dbReference type="PROSITE" id="PS00732">
    <property type="entry name" value="RIBOSOMAL_S16"/>
    <property type="match status" value="1"/>
</dbReference>
<reference key="1">
    <citation type="journal article" date="2008" name="PLoS ONE">
        <title>Genome biology of Actinobacillus pleuropneumoniae JL03, an isolate of serotype 3 prevalent in China.</title>
        <authorList>
            <person name="Xu Z."/>
            <person name="Zhou Y."/>
            <person name="Li L."/>
            <person name="Zhou R."/>
            <person name="Xiao S."/>
            <person name="Wan Y."/>
            <person name="Zhang S."/>
            <person name="Wang K."/>
            <person name="Li W."/>
            <person name="Li L."/>
            <person name="Jin H."/>
            <person name="Kang M."/>
            <person name="Dalai B."/>
            <person name="Li T."/>
            <person name="Liu L."/>
            <person name="Cheng Y."/>
            <person name="Zhang L."/>
            <person name="Xu T."/>
            <person name="Zheng H."/>
            <person name="Pu S."/>
            <person name="Wang B."/>
            <person name="Gu W."/>
            <person name="Zhang X.L."/>
            <person name="Zhu G.-F."/>
            <person name="Wang S."/>
            <person name="Zhao G.-P."/>
            <person name="Chen H."/>
        </authorList>
    </citation>
    <scope>NUCLEOTIDE SEQUENCE [LARGE SCALE GENOMIC DNA]</scope>
    <source>
        <strain>JL03</strain>
    </source>
</reference>
<name>RS16_ACTPJ</name>
<evidence type="ECO:0000255" key="1">
    <source>
        <dbReference type="HAMAP-Rule" id="MF_00385"/>
    </source>
</evidence>
<evidence type="ECO:0000305" key="2"/>
<keyword id="KW-0687">Ribonucleoprotein</keyword>
<keyword id="KW-0689">Ribosomal protein</keyword>
<proteinExistence type="inferred from homology"/>
<accession>B0BSV8</accession>